<feature type="chain" id="PRO_0000384618" description="Ribosome maturation factor RimP">
    <location>
        <begin position="1"/>
        <end position="138"/>
    </location>
</feature>
<keyword id="KW-0963">Cytoplasm</keyword>
<keyword id="KW-0690">Ribosome biogenesis</keyword>
<accession>A7ZC71</accession>
<sequence length="138" mass="15411">MDNLDKLIRECGVELYDSEIANENGRAIFRVYITKDGGVSLDDCEKVSRLLSPIFDVTPPVSGDYNLEVSSPGLERKLSKPSHFKASVGELVKVQTEAEKFAGRLVKADEESIAVENEEGIFEINISEIKKAKTYLEW</sequence>
<gene>
    <name evidence="1" type="primary">rimP</name>
    <name type="ordered locus">Ccon26_04780</name>
    <name type="ORF">CCC13826_1497</name>
</gene>
<comment type="function">
    <text evidence="1">Required for maturation of 30S ribosomal subunits.</text>
</comment>
<comment type="subcellular location">
    <subcellularLocation>
        <location evidence="1">Cytoplasm</location>
    </subcellularLocation>
</comment>
<comment type="similarity">
    <text evidence="1">Belongs to the RimP family.</text>
</comment>
<proteinExistence type="inferred from homology"/>
<name>RIMP_CAMC1</name>
<protein>
    <recommendedName>
        <fullName evidence="1">Ribosome maturation factor RimP</fullName>
    </recommendedName>
</protein>
<reference key="1">
    <citation type="submission" date="2007-10" db="EMBL/GenBank/DDBJ databases">
        <title>Genome sequence of Campylobacter concisus 13826 isolated from human feces.</title>
        <authorList>
            <person name="Fouts D.E."/>
            <person name="Mongodin E.F."/>
            <person name="Puiu D."/>
            <person name="Sebastian Y."/>
            <person name="Miller W.G."/>
            <person name="Mandrell R.E."/>
            <person name="On S."/>
            <person name="Nelson K.E."/>
        </authorList>
    </citation>
    <scope>NUCLEOTIDE SEQUENCE [LARGE SCALE GENOMIC DNA]</scope>
    <source>
        <strain>13826</strain>
    </source>
</reference>
<evidence type="ECO:0000255" key="1">
    <source>
        <dbReference type="HAMAP-Rule" id="MF_01077"/>
    </source>
</evidence>
<dbReference type="EMBL" id="CP000792">
    <property type="protein sequence ID" value="EAT98984.1"/>
    <property type="molecule type" value="Genomic_DNA"/>
</dbReference>
<dbReference type="RefSeq" id="WP_012001358.1">
    <property type="nucleotide sequence ID" value="NC_009802.2"/>
</dbReference>
<dbReference type="SMR" id="A7ZC71"/>
<dbReference type="STRING" id="360104.CCC13826_1497"/>
<dbReference type="KEGG" id="cco:CCC13826_1497"/>
<dbReference type="eggNOG" id="COG0779">
    <property type="taxonomic scope" value="Bacteria"/>
</dbReference>
<dbReference type="HOGENOM" id="CLU_070525_2_2_7"/>
<dbReference type="OrthoDB" id="9805006at2"/>
<dbReference type="Proteomes" id="UP000001121">
    <property type="component" value="Chromosome"/>
</dbReference>
<dbReference type="GO" id="GO:0005829">
    <property type="term" value="C:cytosol"/>
    <property type="evidence" value="ECO:0007669"/>
    <property type="project" value="TreeGrafter"/>
</dbReference>
<dbReference type="GO" id="GO:0000028">
    <property type="term" value="P:ribosomal small subunit assembly"/>
    <property type="evidence" value="ECO:0007669"/>
    <property type="project" value="TreeGrafter"/>
</dbReference>
<dbReference type="GO" id="GO:0006412">
    <property type="term" value="P:translation"/>
    <property type="evidence" value="ECO:0007669"/>
    <property type="project" value="TreeGrafter"/>
</dbReference>
<dbReference type="CDD" id="cd01734">
    <property type="entry name" value="YlxS_C"/>
    <property type="match status" value="1"/>
</dbReference>
<dbReference type="Gene3D" id="2.30.30.180">
    <property type="entry name" value="Ribosome maturation factor RimP, C-terminal domain"/>
    <property type="match status" value="1"/>
</dbReference>
<dbReference type="Gene3D" id="3.30.300.70">
    <property type="entry name" value="RimP-like superfamily, N-terminal"/>
    <property type="match status" value="1"/>
</dbReference>
<dbReference type="HAMAP" id="MF_01077">
    <property type="entry name" value="RimP"/>
    <property type="match status" value="1"/>
</dbReference>
<dbReference type="InterPro" id="IPR003728">
    <property type="entry name" value="Ribosome_maturation_RimP"/>
</dbReference>
<dbReference type="InterPro" id="IPR028998">
    <property type="entry name" value="RimP_C"/>
</dbReference>
<dbReference type="InterPro" id="IPR036847">
    <property type="entry name" value="RimP_C_sf"/>
</dbReference>
<dbReference type="InterPro" id="IPR028989">
    <property type="entry name" value="RimP_N"/>
</dbReference>
<dbReference type="InterPro" id="IPR035956">
    <property type="entry name" value="RimP_N_sf"/>
</dbReference>
<dbReference type="NCBIfam" id="NF011232">
    <property type="entry name" value="PRK14639.1"/>
    <property type="match status" value="1"/>
</dbReference>
<dbReference type="PANTHER" id="PTHR33867">
    <property type="entry name" value="RIBOSOME MATURATION FACTOR RIMP"/>
    <property type="match status" value="1"/>
</dbReference>
<dbReference type="PANTHER" id="PTHR33867:SF1">
    <property type="entry name" value="RIBOSOME MATURATION FACTOR RIMP"/>
    <property type="match status" value="1"/>
</dbReference>
<dbReference type="Pfam" id="PF17384">
    <property type="entry name" value="DUF150_C"/>
    <property type="match status" value="1"/>
</dbReference>
<dbReference type="Pfam" id="PF02576">
    <property type="entry name" value="RimP_N"/>
    <property type="match status" value="1"/>
</dbReference>
<dbReference type="SUPFAM" id="SSF74942">
    <property type="entry name" value="YhbC-like, C-terminal domain"/>
    <property type="match status" value="1"/>
</dbReference>
<dbReference type="SUPFAM" id="SSF75420">
    <property type="entry name" value="YhbC-like, N-terminal domain"/>
    <property type="match status" value="1"/>
</dbReference>
<organism>
    <name type="scientific">Campylobacter concisus (strain 13826)</name>
    <dbReference type="NCBI Taxonomy" id="360104"/>
    <lineage>
        <taxon>Bacteria</taxon>
        <taxon>Pseudomonadati</taxon>
        <taxon>Campylobacterota</taxon>
        <taxon>Epsilonproteobacteria</taxon>
        <taxon>Campylobacterales</taxon>
        <taxon>Campylobacteraceae</taxon>
        <taxon>Campylobacter</taxon>
    </lineage>
</organism>